<reference key="1">
    <citation type="journal article" date="2009" name="PLoS Genet.">
        <title>Organised genome dynamics in the Escherichia coli species results in highly diverse adaptive paths.</title>
        <authorList>
            <person name="Touchon M."/>
            <person name="Hoede C."/>
            <person name="Tenaillon O."/>
            <person name="Barbe V."/>
            <person name="Baeriswyl S."/>
            <person name="Bidet P."/>
            <person name="Bingen E."/>
            <person name="Bonacorsi S."/>
            <person name="Bouchier C."/>
            <person name="Bouvet O."/>
            <person name="Calteau A."/>
            <person name="Chiapello H."/>
            <person name="Clermont O."/>
            <person name="Cruveiller S."/>
            <person name="Danchin A."/>
            <person name="Diard M."/>
            <person name="Dossat C."/>
            <person name="Karoui M.E."/>
            <person name="Frapy E."/>
            <person name="Garry L."/>
            <person name="Ghigo J.M."/>
            <person name="Gilles A.M."/>
            <person name="Johnson J."/>
            <person name="Le Bouguenec C."/>
            <person name="Lescat M."/>
            <person name="Mangenot S."/>
            <person name="Martinez-Jehanne V."/>
            <person name="Matic I."/>
            <person name="Nassif X."/>
            <person name="Oztas S."/>
            <person name="Petit M.A."/>
            <person name="Pichon C."/>
            <person name="Rouy Z."/>
            <person name="Ruf C.S."/>
            <person name="Schneider D."/>
            <person name="Tourret J."/>
            <person name="Vacherie B."/>
            <person name="Vallenet D."/>
            <person name="Medigue C."/>
            <person name="Rocha E.P.C."/>
            <person name="Denamur E."/>
        </authorList>
    </citation>
    <scope>NUCLEOTIDE SEQUENCE [LARGE SCALE GENOMIC DNA]</scope>
    <source>
        <strain>IAI1</strain>
    </source>
</reference>
<proteinExistence type="inferred from homology"/>
<keyword id="KW-0131">Cell cycle</keyword>
<keyword id="KW-0132">Cell division</keyword>
<keyword id="KW-0997">Cell inner membrane</keyword>
<keyword id="KW-1003">Cell membrane</keyword>
<keyword id="KW-0472">Membrane</keyword>
<keyword id="KW-0812">Transmembrane</keyword>
<keyword id="KW-1133">Transmembrane helix</keyword>
<sequence length="328" mass="36494">MMQDLRLILIIVGAIAIIALLVHGFWTSRKERSSMFRDRPLKRMKSKRDDDSYDEDVEDDEGVGEVRVHRVNHAPANAQEHEAARPSPQHQYQPPYASAQPRQPVQQPPEAQVPPQHAPRPAQPVQQPAYQPQPEQPLQQPVSPQVAPAPQPVHSAPQPAQQAFQPAEPVAAPQPEPVAEPAPVMDKPKRKEAVIIMNVAAHHGSELNGELLLNSIQQAGFIFGDMNIYHRHLSPDGSGPALFSLANMVKPGTFDPEMKDFTTPGVTIFMQVPSYGDELQNFKLMLQSAQHIADEVGGVVLDDQRRMMTPQKLREYQDIIREVKDANA</sequence>
<name>ZIPA_ECO8A</name>
<feature type="chain" id="PRO_1000127217" description="Cell division protein ZipA">
    <location>
        <begin position="1"/>
        <end position="328"/>
    </location>
</feature>
<feature type="topological domain" description="Periplasmic" evidence="1">
    <location>
        <begin position="1"/>
        <end position="6"/>
    </location>
</feature>
<feature type="transmembrane region" description="Helical" evidence="1">
    <location>
        <begin position="7"/>
        <end position="27"/>
    </location>
</feature>
<feature type="topological domain" description="Cytoplasmic" evidence="1">
    <location>
        <begin position="28"/>
        <end position="328"/>
    </location>
</feature>
<feature type="region of interest" description="Disordered" evidence="2">
    <location>
        <begin position="42"/>
        <end position="186"/>
    </location>
</feature>
<feature type="compositionally biased region" description="Acidic residues" evidence="2">
    <location>
        <begin position="51"/>
        <end position="63"/>
    </location>
</feature>
<feature type="compositionally biased region" description="Low complexity" evidence="2">
    <location>
        <begin position="99"/>
        <end position="115"/>
    </location>
</feature>
<feature type="compositionally biased region" description="Low complexity" evidence="2">
    <location>
        <begin position="123"/>
        <end position="171"/>
    </location>
</feature>
<protein>
    <recommendedName>
        <fullName evidence="1">Cell division protein ZipA</fullName>
    </recommendedName>
</protein>
<accession>B7M6S2</accession>
<evidence type="ECO:0000255" key="1">
    <source>
        <dbReference type="HAMAP-Rule" id="MF_00509"/>
    </source>
</evidence>
<evidence type="ECO:0000256" key="2">
    <source>
        <dbReference type="SAM" id="MobiDB-lite"/>
    </source>
</evidence>
<organism>
    <name type="scientific">Escherichia coli O8 (strain IAI1)</name>
    <dbReference type="NCBI Taxonomy" id="585034"/>
    <lineage>
        <taxon>Bacteria</taxon>
        <taxon>Pseudomonadati</taxon>
        <taxon>Pseudomonadota</taxon>
        <taxon>Gammaproteobacteria</taxon>
        <taxon>Enterobacterales</taxon>
        <taxon>Enterobacteriaceae</taxon>
        <taxon>Escherichia</taxon>
    </lineage>
</organism>
<comment type="function">
    <text evidence="1">Essential cell division protein that stabilizes the FtsZ protofilaments by cross-linking them and that serves as a cytoplasmic membrane anchor for the Z ring. Also required for the recruitment to the septal ring of downstream cell division proteins.</text>
</comment>
<comment type="subunit">
    <text evidence="1">Interacts with FtsZ via their C-terminal domains.</text>
</comment>
<comment type="subcellular location">
    <subcellularLocation>
        <location evidence="1">Cell inner membrane</location>
        <topology evidence="1">Single-pass type I membrane protein</topology>
    </subcellularLocation>
    <text evidence="1">Localizes to the Z ring in an FtsZ-dependent manner.</text>
</comment>
<comment type="similarity">
    <text evidence="1">Belongs to the ZipA family.</text>
</comment>
<dbReference type="EMBL" id="CU928160">
    <property type="protein sequence ID" value="CAQ99310.1"/>
    <property type="molecule type" value="Genomic_DNA"/>
</dbReference>
<dbReference type="RefSeq" id="WP_001297862.1">
    <property type="nucleotide sequence ID" value="NC_011741.1"/>
</dbReference>
<dbReference type="SMR" id="B7M6S2"/>
<dbReference type="GeneID" id="75204317"/>
<dbReference type="KEGG" id="ecr:ECIAI1_2470"/>
<dbReference type="HOGENOM" id="CLU_030174_1_0_6"/>
<dbReference type="GO" id="GO:0032153">
    <property type="term" value="C:cell division site"/>
    <property type="evidence" value="ECO:0007669"/>
    <property type="project" value="UniProtKB-UniRule"/>
</dbReference>
<dbReference type="GO" id="GO:0005886">
    <property type="term" value="C:plasma membrane"/>
    <property type="evidence" value="ECO:0007669"/>
    <property type="project" value="UniProtKB-SubCell"/>
</dbReference>
<dbReference type="GO" id="GO:0000917">
    <property type="term" value="P:division septum assembly"/>
    <property type="evidence" value="ECO:0007669"/>
    <property type="project" value="TreeGrafter"/>
</dbReference>
<dbReference type="GO" id="GO:0043093">
    <property type="term" value="P:FtsZ-dependent cytokinesis"/>
    <property type="evidence" value="ECO:0007669"/>
    <property type="project" value="UniProtKB-UniRule"/>
</dbReference>
<dbReference type="CDD" id="cd00231">
    <property type="entry name" value="ZipA"/>
    <property type="match status" value="1"/>
</dbReference>
<dbReference type="FunFam" id="3.30.1400.10:FF:000001">
    <property type="entry name" value="Cell division protein ZipA"/>
    <property type="match status" value="1"/>
</dbReference>
<dbReference type="Gene3D" id="3.30.1400.10">
    <property type="entry name" value="ZipA, C-terminal FtsZ-binding domain"/>
    <property type="match status" value="1"/>
</dbReference>
<dbReference type="HAMAP" id="MF_00509">
    <property type="entry name" value="ZipA"/>
    <property type="match status" value="1"/>
</dbReference>
<dbReference type="InterPro" id="IPR011919">
    <property type="entry name" value="Cell_div_ZipA"/>
</dbReference>
<dbReference type="InterPro" id="IPR007449">
    <property type="entry name" value="ZipA_FtsZ-bd_C"/>
</dbReference>
<dbReference type="InterPro" id="IPR036765">
    <property type="entry name" value="ZipA_FtsZ-bd_C_sf"/>
</dbReference>
<dbReference type="NCBIfam" id="TIGR02205">
    <property type="entry name" value="septum_zipA"/>
    <property type="match status" value="1"/>
</dbReference>
<dbReference type="PANTHER" id="PTHR38685">
    <property type="entry name" value="CELL DIVISION PROTEIN ZIPA"/>
    <property type="match status" value="1"/>
</dbReference>
<dbReference type="PANTHER" id="PTHR38685:SF1">
    <property type="entry name" value="CELL DIVISION PROTEIN ZIPA"/>
    <property type="match status" value="1"/>
</dbReference>
<dbReference type="Pfam" id="PF04354">
    <property type="entry name" value="ZipA_C"/>
    <property type="match status" value="1"/>
</dbReference>
<dbReference type="SMART" id="SM00771">
    <property type="entry name" value="ZipA_C"/>
    <property type="match status" value="1"/>
</dbReference>
<dbReference type="SUPFAM" id="SSF64383">
    <property type="entry name" value="Cell-division protein ZipA, C-terminal domain"/>
    <property type="match status" value="1"/>
</dbReference>
<gene>
    <name evidence="1" type="primary">zipA</name>
    <name type="ordered locus">ECIAI1_2470</name>
</gene>